<dbReference type="EC" id="4.2.1.10" evidence="1"/>
<dbReference type="EMBL" id="BA000054">
    <property type="protein sequence ID" value="BAE64073.1"/>
    <property type="status" value="ALT_SEQ"/>
    <property type="molecule type" value="Genomic_DNA"/>
</dbReference>
<dbReference type="RefSeq" id="XP_001825206.2">
    <property type="nucleotide sequence ID" value="XM_001825154.2"/>
</dbReference>
<dbReference type="SMR" id="Q2U2Z2"/>
<dbReference type="STRING" id="510516.Q2U2Z2"/>
<dbReference type="EnsemblFungi" id="BAE64073">
    <property type="protein sequence ID" value="BAE64073"/>
    <property type="gene ID" value="AO090038000261"/>
</dbReference>
<dbReference type="UniPathway" id="UPA00088">
    <property type="reaction ID" value="UER00178"/>
</dbReference>
<dbReference type="Proteomes" id="UP000006564">
    <property type="component" value="Chromosome 6"/>
</dbReference>
<dbReference type="GO" id="GO:0003855">
    <property type="term" value="F:3-dehydroquinate dehydratase activity"/>
    <property type="evidence" value="ECO:0007669"/>
    <property type="project" value="UniProtKB-UniRule"/>
</dbReference>
<dbReference type="GO" id="GO:0046279">
    <property type="term" value="P:3,4-dihydroxybenzoate biosynthetic process"/>
    <property type="evidence" value="ECO:0007669"/>
    <property type="project" value="UniProtKB-UniRule"/>
</dbReference>
<dbReference type="GO" id="GO:0019631">
    <property type="term" value="P:quinate catabolic process"/>
    <property type="evidence" value="ECO:0007669"/>
    <property type="project" value="TreeGrafter"/>
</dbReference>
<dbReference type="CDD" id="cd00466">
    <property type="entry name" value="DHQase_II"/>
    <property type="match status" value="1"/>
</dbReference>
<dbReference type="Gene3D" id="3.40.50.9100">
    <property type="entry name" value="Dehydroquinase, class II"/>
    <property type="match status" value="1"/>
</dbReference>
<dbReference type="HAMAP" id="MF_00169">
    <property type="entry name" value="AroQ"/>
    <property type="match status" value="1"/>
</dbReference>
<dbReference type="InterPro" id="IPR001874">
    <property type="entry name" value="DHquinase_II"/>
</dbReference>
<dbReference type="InterPro" id="IPR018509">
    <property type="entry name" value="DHquinase_II_CS"/>
</dbReference>
<dbReference type="InterPro" id="IPR036441">
    <property type="entry name" value="DHquinase_II_sf"/>
</dbReference>
<dbReference type="NCBIfam" id="TIGR01088">
    <property type="entry name" value="aroQ"/>
    <property type="match status" value="1"/>
</dbReference>
<dbReference type="NCBIfam" id="NF003804">
    <property type="entry name" value="PRK05395.1-1"/>
    <property type="match status" value="1"/>
</dbReference>
<dbReference type="NCBIfam" id="NF003805">
    <property type="entry name" value="PRK05395.1-2"/>
    <property type="match status" value="1"/>
</dbReference>
<dbReference type="NCBIfam" id="NF003806">
    <property type="entry name" value="PRK05395.1-3"/>
    <property type="match status" value="1"/>
</dbReference>
<dbReference type="NCBIfam" id="NF003807">
    <property type="entry name" value="PRK05395.1-4"/>
    <property type="match status" value="1"/>
</dbReference>
<dbReference type="PANTHER" id="PTHR21272">
    <property type="entry name" value="CATABOLIC 3-DEHYDROQUINASE"/>
    <property type="match status" value="1"/>
</dbReference>
<dbReference type="PANTHER" id="PTHR21272:SF5">
    <property type="entry name" value="CATABOLIC 3-DEHYDROQUINASE"/>
    <property type="match status" value="1"/>
</dbReference>
<dbReference type="Pfam" id="PF01220">
    <property type="entry name" value="DHquinase_II"/>
    <property type="match status" value="1"/>
</dbReference>
<dbReference type="PIRSF" id="PIRSF001399">
    <property type="entry name" value="DHquinase_II"/>
    <property type="match status" value="1"/>
</dbReference>
<dbReference type="SUPFAM" id="SSF52304">
    <property type="entry name" value="Type II 3-dehydroquinate dehydratase"/>
    <property type="match status" value="1"/>
</dbReference>
<dbReference type="PROSITE" id="PS01029">
    <property type="entry name" value="DEHYDROQUINASE_II"/>
    <property type="match status" value="1"/>
</dbReference>
<accession>Q2U2Z2</accession>
<name>3DHQ_ASPOR</name>
<protein>
    <recommendedName>
        <fullName evidence="1">Catabolic 3-dehydroquinase</fullName>
        <shortName evidence="1">cDHQase</shortName>
        <ecNumber evidence="1">4.2.1.10</ecNumber>
    </recommendedName>
    <alternativeName>
        <fullName evidence="1">3-dehydroquinate dehydratase</fullName>
    </alternativeName>
</protein>
<comment type="function">
    <text evidence="1">Is involved in the catabolism of quinate. Allows the utilization of quinate as carbon source via the beta-ketoadipate pathway.</text>
</comment>
<comment type="catalytic activity">
    <reaction evidence="1">
        <text>3-dehydroquinate = 3-dehydroshikimate + H2O</text>
        <dbReference type="Rhea" id="RHEA:21096"/>
        <dbReference type="ChEBI" id="CHEBI:15377"/>
        <dbReference type="ChEBI" id="CHEBI:16630"/>
        <dbReference type="ChEBI" id="CHEBI:32364"/>
        <dbReference type="EC" id="4.2.1.10"/>
    </reaction>
</comment>
<comment type="pathway">
    <text evidence="1">Aromatic compound metabolism; 3,4-dihydroxybenzoate biosynthesis; 3,4-dihydroxybenzoate from 3-dehydroquinate: step 1/2.</text>
</comment>
<comment type="subunit">
    <text evidence="1">Homododecamer. Adopts a ring-like structure, composed of an arrangement of two hexameric rings stacked on top of one another.</text>
</comment>
<comment type="similarity">
    <text evidence="1">Belongs to the type-II 3-dehydroquinase family.</text>
</comment>
<comment type="sequence caution" evidence="2">
    <conflict type="erroneous gene model prediction">
        <sequence resource="EMBL-CDS" id="BAE64073"/>
    </conflict>
</comment>
<feature type="chain" id="PRO_0000402358" description="Catabolic 3-dehydroquinase">
    <location>
        <begin position="1"/>
        <end position="153"/>
    </location>
</feature>
<feature type="active site" description="Proton acceptor" evidence="1">
    <location>
        <position position="24"/>
    </location>
</feature>
<feature type="active site" description="Proton donor" evidence="1">
    <location>
        <position position="101"/>
    </location>
</feature>
<feature type="binding site" evidence="1">
    <location>
        <position position="75"/>
    </location>
    <ligand>
        <name>substrate</name>
    </ligand>
</feature>
<feature type="binding site" evidence="1">
    <location>
        <position position="81"/>
    </location>
    <ligand>
        <name>substrate</name>
    </ligand>
</feature>
<feature type="binding site" evidence="1">
    <location>
        <position position="88"/>
    </location>
    <ligand>
        <name>substrate</name>
    </ligand>
</feature>
<feature type="binding site" evidence="1">
    <location>
        <begin position="102"/>
        <end position="103"/>
    </location>
    <ligand>
        <name>substrate</name>
    </ligand>
</feature>
<feature type="binding site" evidence="1">
    <location>
        <position position="112"/>
    </location>
    <ligand>
        <name>substrate</name>
    </ligand>
</feature>
<feature type="site" description="Transition state stabilizer" evidence="1">
    <location>
        <position position="19"/>
    </location>
</feature>
<keyword id="KW-0456">Lyase</keyword>
<keyword id="KW-0672">Quinate metabolism</keyword>
<keyword id="KW-1185">Reference proteome</keyword>
<sequence>MGKSILLINGPNLNLLGTREPHIYGSTTLADVEASSKAHAASLGATLETYQSNHEGAIVDRIQAARGNVDGIVINPGAYTHTSVAIRDALVGVDIPFIELHVSNVHAREPWRHHSYFSDKAAGIIVGLGVYGYKVAVEHVAVNFKSREEKAAL</sequence>
<proteinExistence type="inferred from homology"/>
<gene>
    <name evidence="1" type="primary">qutE</name>
    <name type="ORF">AO090038000261</name>
</gene>
<organism>
    <name type="scientific">Aspergillus oryzae (strain ATCC 42149 / RIB 40)</name>
    <name type="common">Yellow koji mold</name>
    <dbReference type="NCBI Taxonomy" id="510516"/>
    <lineage>
        <taxon>Eukaryota</taxon>
        <taxon>Fungi</taxon>
        <taxon>Dikarya</taxon>
        <taxon>Ascomycota</taxon>
        <taxon>Pezizomycotina</taxon>
        <taxon>Eurotiomycetes</taxon>
        <taxon>Eurotiomycetidae</taxon>
        <taxon>Eurotiales</taxon>
        <taxon>Aspergillaceae</taxon>
        <taxon>Aspergillus</taxon>
        <taxon>Aspergillus subgen. Circumdati</taxon>
    </lineage>
</organism>
<evidence type="ECO:0000255" key="1">
    <source>
        <dbReference type="HAMAP-Rule" id="MF_03136"/>
    </source>
</evidence>
<evidence type="ECO:0000305" key="2"/>
<reference key="1">
    <citation type="journal article" date="2005" name="Nature">
        <title>Genome sequencing and analysis of Aspergillus oryzae.</title>
        <authorList>
            <person name="Machida M."/>
            <person name="Asai K."/>
            <person name="Sano M."/>
            <person name="Tanaka T."/>
            <person name="Kumagai T."/>
            <person name="Terai G."/>
            <person name="Kusumoto K."/>
            <person name="Arima T."/>
            <person name="Akita O."/>
            <person name="Kashiwagi Y."/>
            <person name="Abe K."/>
            <person name="Gomi K."/>
            <person name="Horiuchi H."/>
            <person name="Kitamoto K."/>
            <person name="Kobayashi T."/>
            <person name="Takeuchi M."/>
            <person name="Denning D.W."/>
            <person name="Galagan J.E."/>
            <person name="Nierman W.C."/>
            <person name="Yu J."/>
            <person name="Archer D.B."/>
            <person name="Bennett J.W."/>
            <person name="Bhatnagar D."/>
            <person name="Cleveland T.E."/>
            <person name="Fedorova N.D."/>
            <person name="Gotoh O."/>
            <person name="Horikawa H."/>
            <person name="Hosoyama A."/>
            <person name="Ichinomiya M."/>
            <person name="Igarashi R."/>
            <person name="Iwashita K."/>
            <person name="Juvvadi P.R."/>
            <person name="Kato M."/>
            <person name="Kato Y."/>
            <person name="Kin T."/>
            <person name="Kokubun A."/>
            <person name="Maeda H."/>
            <person name="Maeyama N."/>
            <person name="Maruyama J."/>
            <person name="Nagasaki H."/>
            <person name="Nakajima T."/>
            <person name="Oda K."/>
            <person name="Okada K."/>
            <person name="Paulsen I."/>
            <person name="Sakamoto K."/>
            <person name="Sawano T."/>
            <person name="Takahashi M."/>
            <person name="Takase K."/>
            <person name="Terabayashi Y."/>
            <person name="Wortman J.R."/>
            <person name="Yamada O."/>
            <person name="Yamagata Y."/>
            <person name="Anazawa H."/>
            <person name="Hata Y."/>
            <person name="Koide Y."/>
            <person name="Komori T."/>
            <person name="Koyama Y."/>
            <person name="Minetoki T."/>
            <person name="Suharnan S."/>
            <person name="Tanaka A."/>
            <person name="Isono K."/>
            <person name="Kuhara S."/>
            <person name="Ogasawara N."/>
            <person name="Kikuchi H."/>
        </authorList>
    </citation>
    <scope>NUCLEOTIDE SEQUENCE [LARGE SCALE GENOMIC DNA]</scope>
    <source>
        <strain>ATCC 42149 / RIB 40</strain>
    </source>
</reference>